<name>EIF3M_PHANO</name>
<accession>Q0UXJ7</accession>
<reference key="1">
    <citation type="journal article" date="2007" name="Plant Cell">
        <title>Dothideomycete-plant interactions illuminated by genome sequencing and EST analysis of the wheat pathogen Stagonospora nodorum.</title>
        <authorList>
            <person name="Hane J.K."/>
            <person name="Lowe R.G.T."/>
            <person name="Solomon P.S."/>
            <person name="Tan K.-C."/>
            <person name="Schoch C.L."/>
            <person name="Spatafora J.W."/>
            <person name="Crous P.W."/>
            <person name="Kodira C.D."/>
            <person name="Birren B.W."/>
            <person name="Galagan J.E."/>
            <person name="Torriani S.F.F."/>
            <person name="McDonald B.A."/>
            <person name="Oliver R.P."/>
        </authorList>
    </citation>
    <scope>NUCLEOTIDE SEQUENCE [LARGE SCALE GENOMIC DNA]</scope>
    <source>
        <strain>SN15 / ATCC MYA-4574 / FGSC 10173</strain>
    </source>
</reference>
<protein>
    <recommendedName>
        <fullName evidence="1">Eukaryotic translation initiation factor 3 subunit M</fullName>
        <shortName evidence="1">eIF3m</shortName>
    </recommendedName>
</protein>
<proteinExistence type="inferred from homology"/>
<sequence>MPGPKNTILIEGSFEELTDEFAQYIDTLKKSQGEEASNLQGETAELLKENKKDDVLKKLVVGAQALNQAPEKVCAIEFIAAYNLLIHLVNQSPSVNMYLPKICQNLSAPISSSPQNGGGLALSILSTIFNTTSAGSEVRYHVLLAILRVIRATSNFETLRPQLKQLDKWLEAWETEEEDSRKLYLAVSDVASDAGESEQAYTYLLRALRTYPSEEASSPEARELSLRALKSALTHPTHFDFQDLTDLDSIQALRNSDPIFFQLLEIFNSDLLDDYNDFKDEHDGWVEESGLDGAALNRKMRLLTLASMAASAGQTRSLPYDKIAKALQISSEEVEMWVIDVIRAGLVEGKLSQLNQTFLIHRSTYRVFGDNQWREVSSRLDMWRNSLTGVLQVIQAEKQRFLQEKEEEANKADNKYDSARGFQRGGQRKQPRALDDDMGLE</sequence>
<keyword id="KW-0963">Cytoplasm</keyword>
<keyword id="KW-0396">Initiation factor</keyword>
<keyword id="KW-0648">Protein biosynthesis</keyword>
<evidence type="ECO:0000255" key="1">
    <source>
        <dbReference type="HAMAP-Rule" id="MF_03012"/>
    </source>
</evidence>
<evidence type="ECO:0000255" key="2">
    <source>
        <dbReference type="PROSITE-ProRule" id="PRU01185"/>
    </source>
</evidence>
<evidence type="ECO:0000256" key="3">
    <source>
        <dbReference type="SAM" id="MobiDB-lite"/>
    </source>
</evidence>
<gene>
    <name type="ORF">SNOG_03517</name>
</gene>
<dbReference type="EMBL" id="CH445329">
    <property type="protein sequence ID" value="EAT88722.2"/>
    <property type="molecule type" value="Genomic_DNA"/>
</dbReference>
<dbReference type="RefSeq" id="XP_001794076.1">
    <property type="nucleotide sequence ID" value="XM_001794024.1"/>
</dbReference>
<dbReference type="SMR" id="Q0UXJ7"/>
<dbReference type="STRING" id="321614.Q0UXJ7"/>
<dbReference type="EnsemblFungi" id="SNOT_03517">
    <property type="protein sequence ID" value="SNOT_03517"/>
    <property type="gene ID" value="SNOG_03517"/>
</dbReference>
<dbReference type="GeneID" id="5970939"/>
<dbReference type="KEGG" id="pno:SNOG_03517"/>
<dbReference type="VEuPathDB" id="FungiDB:JI435_035170"/>
<dbReference type="eggNOG" id="KOG2753">
    <property type="taxonomic scope" value="Eukaryota"/>
</dbReference>
<dbReference type="HOGENOM" id="CLU_035254_0_1_1"/>
<dbReference type="InParanoid" id="Q0UXJ7"/>
<dbReference type="Proteomes" id="UP000001055">
    <property type="component" value="Unassembled WGS sequence"/>
</dbReference>
<dbReference type="GO" id="GO:0016282">
    <property type="term" value="C:eukaryotic 43S preinitiation complex"/>
    <property type="evidence" value="ECO:0007669"/>
    <property type="project" value="UniProtKB-UniRule"/>
</dbReference>
<dbReference type="GO" id="GO:0033290">
    <property type="term" value="C:eukaryotic 48S preinitiation complex"/>
    <property type="evidence" value="ECO:0007669"/>
    <property type="project" value="UniProtKB-UniRule"/>
</dbReference>
<dbReference type="GO" id="GO:0005852">
    <property type="term" value="C:eukaryotic translation initiation factor 3 complex"/>
    <property type="evidence" value="ECO:0000318"/>
    <property type="project" value="GO_Central"/>
</dbReference>
<dbReference type="GO" id="GO:0071541">
    <property type="term" value="C:eukaryotic translation initiation factor 3 complex, eIF3m"/>
    <property type="evidence" value="ECO:0007669"/>
    <property type="project" value="UniProtKB-UniRule"/>
</dbReference>
<dbReference type="GO" id="GO:0003743">
    <property type="term" value="F:translation initiation factor activity"/>
    <property type="evidence" value="ECO:0007669"/>
    <property type="project" value="UniProtKB-UniRule"/>
</dbReference>
<dbReference type="GO" id="GO:0002183">
    <property type="term" value="P:cytoplasmic translational initiation"/>
    <property type="evidence" value="ECO:0000318"/>
    <property type="project" value="GO_Central"/>
</dbReference>
<dbReference type="GO" id="GO:0001732">
    <property type="term" value="P:formation of cytoplasmic translation initiation complex"/>
    <property type="evidence" value="ECO:0007669"/>
    <property type="project" value="UniProtKB-UniRule"/>
</dbReference>
<dbReference type="HAMAP" id="MF_03012">
    <property type="entry name" value="eIF3m"/>
    <property type="match status" value="1"/>
</dbReference>
<dbReference type="InterPro" id="IPR045237">
    <property type="entry name" value="COPS7/eIF3m"/>
</dbReference>
<dbReference type="InterPro" id="IPR027528">
    <property type="entry name" value="eIF3m"/>
</dbReference>
<dbReference type="InterPro" id="IPR040750">
    <property type="entry name" value="eIF3m_C_helix"/>
</dbReference>
<dbReference type="InterPro" id="IPR000717">
    <property type="entry name" value="PCI_dom"/>
</dbReference>
<dbReference type="PANTHER" id="PTHR15350">
    <property type="entry name" value="COP9 SIGNALOSOME COMPLEX SUBUNIT 7/DENDRITIC CELL PROTEIN GA17"/>
    <property type="match status" value="1"/>
</dbReference>
<dbReference type="PANTHER" id="PTHR15350:SF2">
    <property type="entry name" value="EUKARYOTIC TRANSLATION INITIATION FACTOR 3 SUBUNIT M"/>
    <property type="match status" value="1"/>
</dbReference>
<dbReference type="Pfam" id="PF18005">
    <property type="entry name" value="eIF3m_C_helix"/>
    <property type="match status" value="1"/>
</dbReference>
<dbReference type="Pfam" id="PF01399">
    <property type="entry name" value="PCI"/>
    <property type="match status" value="1"/>
</dbReference>
<dbReference type="SMART" id="SM00088">
    <property type="entry name" value="PINT"/>
    <property type="match status" value="1"/>
</dbReference>
<dbReference type="PROSITE" id="PS50250">
    <property type="entry name" value="PCI"/>
    <property type="match status" value="1"/>
</dbReference>
<comment type="function">
    <text evidence="1">Component of the eukaryotic translation initiation factor 3 (eIF-3) complex, which is involved in protein synthesis of a specialized repertoire of mRNAs and, together with other initiation factors, stimulates binding of mRNA and methionyl-tRNAi to the 40S ribosome. The eIF-3 complex specifically targets and initiates translation of a subset of mRNAs involved in cell proliferation.</text>
</comment>
<comment type="subunit">
    <text evidence="1">Component of the eukaryotic translation initiation factor 3 (eIF-3) complex.</text>
</comment>
<comment type="subcellular location">
    <subcellularLocation>
        <location evidence="1">Cytoplasm</location>
    </subcellularLocation>
</comment>
<comment type="similarity">
    <text evidence="1">Belongs to the eIF-3 subunit M family.</text>
</comment>
<feature type="chain" id="PRO_0000366023" description="Eukaryotic translation initiation factor 3 subunit M">
    <location>
        <begin position="1"/>
        <end position="441"/>
    </location>
</feature>
<feature type="domain" description="PCI" evidence="2">
    <location>
        <begin position="196"/>
        <end position="365"/>
    </location>
</feature>
<feature type="region of interest" description="Disordered" evidence="3">
    <location>
        <begin position="405"/>
        <end position="441"/>
    </location>
</feature>
<feature type="compositionally biased region" description="Basic and acidic residues" evidence="3">
    <location>
        <begin position="405"/>
        <end position="418"/>
    </location>
</feature>
<organism>
    <name type="scientific">Phaeosphaeria nodorum (strain SN15 / ATCC MYA-4574 / FGSC 10173)</name>
    <name type="common">Glume blotch fungus</name>
    <name type="synonym">Parastagonospora nodorum</name>
    <dbReference type="NCBI Taxonomy" id="321614"/>
    <lineage>
        <taxon>Eukaryota</taxon>
        <taxon>Fungi</taxon>
        <taxon>Dikarya</taxon>
        <taxon>Ascomycota</taxon>
        <taxon>Pezizomycotina</taxon>
        <taxon>Dothideomycetes</taxon>
        <taxon>Pleosporomycetidae</taxon>
        <taxon>Pleosporales</taxon>
        <taxon>Pleosporineae</taxon>
        <taxon>Phaeosphaeriaceae</taxon>
        <taxon>Parastagonospora</taxon>
    </lineage>
</organism>